<proteinExistence type="evidence at protein level"/>
<comment type="function">
    <text evidence="6 7">Deubiquitinating enzyme that specifically hydrolyzes 'Lys-63'-linked polyubiquitin to monoubiquitin (PubMed:23827681). Required for the stability and translation of a subset mRNAs with a high abundance of rare codons by mediating deubiquitination of 40S ribosomal protein RPS10/eS10, thereby antagonizing ZNF598-mediated 40S ubiquitination (PubMed:36445135). The abundance of rare codons in mRNAs can limit the translation rate and can lead to ribosome collisions that trigger activation of ribosome quality control (RQC) pathway by ZNF598 (PubMed:36445135). OTUD1-mediated deubiquitination prevents activation of the RQC and subsequent dissociation of ribosomes and stimulates formation of polysomes and translation (PubMed:36445135).</text>
</comment>
<comment type="catalytic activity">
    <reaction evidence="6 7">
        <text>Thiol-dependent hydrolysis of ester, thioester, amide, peptide and isopeptide bonds formed by the C-terminal Gly of ubiquitin (a 76-residue protein attached to proteins as an intracellular targeting signal).</text>
        <dbReference type="EC" id="3.4.19.12"/>
    </reaction>
</comment>
<comment type="interaction">
    <interactant intactId="EBI-2510778">
        <id>Q5VV17</id>
    </interactant>
    <interactant intactId="EBI-358522">
        <id>O43353</id>
        <label>RIPK2</label>
    </interactant>
    <organismsDiffer>false</organismsDiffer>
    <experiments>3</experiments>
</comment>
<comment type="domain">
    <text evidence="6">The UIM repeat increases the specificity and efficiency of the enzyme toward 'Lys-63'-linked polyubiquitin.</text>
</comment>
<comment type="domain">
    <text evidence="6">Specificity is not given by the S1' ubiquitin-binding site within the OTU domain (composed of the Cys-, His- and Variable-loops).</text>
</comment>
<accession>Q5VV17</accession>
<keyword id="KW-0002">3D-structure</keyword>
<keyword id="KW-0378">Hydrolase</keyword>
<keyword id="KW-0645">Protease</keyword>
<keyword id="KW-1267">Proteomics identification</keyword>
<keyword id="KW-1185">Reference proteome</keyword>
<keyword id="KW-0788">Thiol protease</keyword>
<keyword id="KW-0833">Ubl conjugation pathway</keyword>
<feature type="chain" id="PRO_0000271018" description="OTU domain-containing protein 1">
    <location>
        <begin position="1"/>
        <end position="481"/>
    </location>
</feature>
<feature type="domain" description="OTU" evidence="4">
    <location>
        <begin position="309"/>
        <end position="438"/>
    </location>
</feature>
<feature type="domain" description="UIM" evidence="3">
    <location>
        <begin position="457"/>
        <end position="476"/>
    </location>
</feature>
<feature type="region of interest" description="Disordered" evidence="5">
    <location>
        <begin position="18"/>
        <end position="60"/>
    </location>
</feature>
<feature type="region of interest" description="Disordered" evidence="5">
    <location>
        <begin position="202"/>
        <end position="282"/>
    </location>
</feature>
<feature type="region of interest" description="Cys-loop" evidence="9">
    <location>
        <begin position="314"/>
        <end position="320"/>
    </location>
</feature>
<feature type="region of interest" description="His-loop" evidence="9">
    <location>
        <begin position="369"/>
        <end position="379"/>
    </location>
</feature>
<feature type="region of interest" description="Variable-loop" evidence="9">
    <location>
        <begin position="426"/>
        <end position="431"/>
    </location>
</feature>
<feature type="compositionally biased region" description="Low complexity" evidence="5">
    <location>
        <begin position="38"/>
        <end position="58"/>
    </location>
</feature>
<feature type="compositionally biased region" description="Basic and acidic residues" evidence="5">
    <location>
        <begin position="225"/>
        <end position="257"/>
    </location>
</feature>
<feature type="compositionally biased region" description="Low complexity" evidence="5">
    <location>
        <begin position="261"/>
        <end position="281"/>
    </location>
</feature>
<feature type="active site" evidence="2">
    <location>
        <position position="317"/>
    </location>
</feature>
<feature type="active site" description="Nucleophile" evidence="10">
    <location>
        <position position="320"/>
    </location>
</feature>
<feature type="active site" evidence="1">
    <location>
        <position position="431"/>
    </location>
</feature>
<feature type="mutagenesis site" description="Abolished deubiquitinase activity." evidence="7">
    <original>C</original>
    <variation>R</variation>
    <location>
        <position position="320"/>
    </location>
</feature>
<feature type="helix" evidence="12">
    <location>
        <begin position="290"/>
        <end position="306"/>
    </location>
</feature>
<feature type="strand" evidence="12">
    <location>
        <begin position="310"/>
        <end position="312"/>
    </location>
</feature>
<feature type="helix" evidence="12">
    <location>
        <begin position="320"/>
        <end position="330"/>
    </location>
</feature>
<feature type="helix" evidence="12">
    <location>
        <begin position="333"/>
        <end position="335"/>
    </location>
</feature>
<feature type="helix" evidence="12">
    <location>
        <begin position="336"/>
        <end position="349"/>
    </location>
</feature>
<feature type="helix" evidence="12">
    <location>
        <begin position="351"/>
        <end position="354"/>
    </location>
</feature>
<feature type="helix" evidence="12">
    <location>
        <begin position="355"/>
        <end position="357"/>
    </location>
</feature>
<feature type="helix" evidence="12">
    <location>
        <begin position="362"/>
        <end position="369"/>
    </location>
</feature>
<feature type="helix" evidence="12">
    <location>
        <begin position="378"/>
        <end position="388"/>
    </location>
</feature>
<feature type="strand" evidence="12">
    <location>
        <begin position="391"/>
        <end position="399"/>
    </location>
</feature>
<feature type="strand" evidence="12">
    <location>
        <begin position="402"/>
        <end position="410"/>
    </location>
</feature>
<feature type="strand" evidence="12">
    <location>
        <begin position="412"/>
        <end position="414"/>
    </location>
</feature>
<feature type="strand" evidence="12">
    <location>
        <begin position="421"/>
        <end position="427"/>
    </location>
</feature>
<feature type="turn" evidence="12">
    <location>
        <begin position="428"/>
        <end position="430"/>
    </location>
</feature>
<feature type="strand" evidence="12">
    <location>
        <begin position="431"/>
        <end position="436"/>
    </location>
</feature>
<sequence>MQLYSSVCTHYPAGAPGPTAAAPAPPAAATPFKVSLQPPGAAGAAPEPETGECQPAAAAEHREAAAVPAAKMPAFSSCFEVVSGAAAPASAAAGPPGASCKPPLPPHYTSTAQITVRALGADRLLLHGPDPVPGAAGSAAAPRGRCLLLAPAPAAPVPPRRGSSAWLLEELLRPDCPEPAGLDATREGPDRNFRLSEHRQALAAAKHRGPAATPGSPDPGPGPWGEEHLAERGPRGWERGGDRCDAPGGDAARRPDPEAEAPPAGSIEAAPSSAAEPVIVSRSDPRDEKLALYLAEVEKQDKYLRQRNKYRFHIIPDGNCLYRAVSKTVYGDQSLHRELREQTVHYIADHLDHFSPLIEGDVGEFIIAAAQDGAWAGYPELLAMGQMLNVNIHLTTGGRLESPTVSTMIHYLGPEDSLRPSIWLSWLSNGHYDAVFDHSYPNPEYDNWCKQTQVQRKRDEELAKSMAISLSKMYIEQNACS</sequence>
<dbReference type="EC" id="3.4.19.12" evidence="6 7"/>
<dbReference type="EMBL" id="AL512603">
    <property type="status" value="NOT_ANNOTATED_CDS"/>
    <property type="molecule type" value="Genomic_DNA"/>
</dbReference>
<dbReference type="CCDS" id="CCDS44366.1"/>
<dbReference type="RefSeq" id="NP_001138845.1">
    <property type="nucleotide sequence ID" value="NM_001145373.3"/>
</dbReference>
<dbReference type="PDB" id="4BOP">
    <property type="method" value="X-ray"/>
    <property type="resolution" value="2.10 A"/>
    <property type="chains" value="A/B=287-437"/>
</dbReference>
<dbReference type="PDBsum" id="4BOP"/>
<dbReference type="SMR" id="Q5VV17"/>
<dbReference type="BioGRID" id="128638">
    <property type="interactions" value="170"/>
</dbReference>
<dbReference type="FunCoup" id="Q5VV17">
    <property type="interactions" value="53"/>
</dbReference>
<dbReference type="IntAct" id="Q5VV17">
    <property type="interactions" value="12"/>
</dbReference>
<dbReference type="MINT" id="Q5VV17"/>
<dbReference type="STRING" id="9606.ENSP00000365678"/>
<dbReference type="BindingDB" id="Q5VV17"/>
<dbReference type="ChEMBL" id="CHEMBL4630832"/>
<dbReference type="MEROPS" id="C85.004"/>
<dbReference type="GlyGen" id="Q5VV17">
    <property type="glycosylation" value="2 sites"/>
</dbReference>
<dbReference type="iPTMnet" id="Q5VV17"/>
<dbReference type="PhosphoSitePlus" id="Q5VV17"/>
<dbReference type="BioMuta" id="OTUD1"/>
<dbReference type="DMDM" id="74747188"/>
<dbReference type="MassIVE" id="Q5VV17"/>
<dbReference type="PaxDb" id="9606-ENSP00000365678"/>
<dbReference type="PeptideAtlas" id="Q5VV17"/>
<dbReference type="ProteomicsDB" id="65434"/>
<dbReference type="Antibodypedia" id="51774">
    <property type="antibodies" value="76 antibodies from 14 providers"/>
</dbReference>
<dbReference type="DNASU" id="220213"/>
<dbReference type="Ensembl" id="ENST00000376495.5">
    <property type="protein sequence ID" value="ENSP00000365678.3"/>
    <property type="gene ID" value="ENSG00000165312.7"/>
</dbReference>
<dbReference type="GeneID" id="220213"/>
<dbReference type="KEGG" id="hsa:220213"/>
<dbReference type="MANE-Select" id="ENST00000376495.5">
    <property type="protein sequence ID" value="ENSP00000365678.3"/>
    <property type="RefSeq nucleotide sequence ID" value="NM_001145373.3"/>
    <property type="RefSeq protein sequence ID" value="NP_001138845.1"/>
</dbReference>
<dbReference type="UCSC" id="uc001irr.3">
    <property type="organism name" value="human"/>
</dbReference>
<dbReference type="AGR" id="HGNC:27346"/>
<dbReference type="CTD" id="220213"/>
<dbReference type="DisGeNET" id="220213"/>
<dbReference type="GeneCards" id="OTUD1"/>
<dbReference type="HGNC" id="HGNC:27346">
    <property type="gene designation" value="OTUD1"/>
</dbReference>
<dbReference type="HPA" id="ENSG00000165312">
    <property type="expression patterns" value="Tissue enhanced (bone)"/>
</dbReference>
<dbReference type="MIM" id="612022">
    <property type="type" value="gene"/>
</dbReference>
<dbReference type="neXtProt" id="NX_Q5VV17"/>
<dbReference type="OpenTargets" id="ENSG00000165312"/>
<dbReference type="PharmGKB" id="PA134932304"/>
<dbReference type="VEuPathDB" id="HostDB:ENSG00000165312"/>
<dbReference type="eggNOG" id="KOG2605">
    <property type="taxonomic scope" value="Eukaryota"/>
</dbReference>
<dbReference type="GeneTree" id="ENSGT00510000049635"/>
<dbReference type="HOGENOM" id="CLU_044163_1_0_1"/>
<dbReference type="InParanoid" id="Q5VV17"/>
<dbReference type="OMA" id="CTHYPSG"/>
<dbReference type="OrthoDB" id="409956at2759"/>
<dbReference type="PAN-GO" id="Q5VV17">
    <property type="GO annotations" value="2 GO annotations based on evolutionary models"/>
</dbReference>
<dbReference type="PhylomeDB" id="Q5VV17"/>
<dbReference type="TreeFam" id="TF338508"/>
<dbReference type="PathwayCommons" id="Q5VV17"/>
<dbReference type="Reactome" id="R-HSA-5357786">
    <property type="pathway name" value="TNFR1-induced proapoptotic signaling"/>
</dbReference>
<dbReference type="Reactome" id="R-HSA-5357905">
    <property type="pathway name" value="Regulation of TNFR1 signaling"/>
</dbReference>
<dbReference type="Reactome" id="R-HSA-5357956">
    <property type="pathway name" value="TNFR1-induced NF-kappa-B signaling pathway"/>
</dbReference>
<dbReference type="SignaLink" id="Q5VV17"/>
<dbReference type="BioGRID-ORCS" id="220213">
    <property type="hits" value="19 hits in 1197 CRISPR screens"/>
</dbReference>
<dbReference type="EvolutionaryTrace" id="Q5VV17"/>
<dbReference type="GenomeRNAi" id="220213"/>
<dbReference type="Pharos" id="Q5VV17">
    <property type="development level" value="Tbio"/>
</dbReference>
<dbReference type="PRO" id="PR:Q5VV17"/>
<dbReference type="Proteomes" id="UP000005640">
    <property type="component" value="Chromosome 10"/>
</dbReference>
<dbReference type="RNAct" id="Q5VV17">
    <property type="molecule type" value="protein"/>
</dbReference>
<dbReference type="Bgee" id="ENSG00000165312">
    <property type="expression patterns" value="Expressed in buccal mucosa cell and 193 other cell types or tissues"/>
</dbReference>
<dbReference type="GO" id="GO:0004843">
    <property type="term" value="F:cysteine-type deubiquitinase activity"/>
    <property type="evidence" value="ECO:0000314"/>
    <property type="project" value="UniProtKB"/>
</dbReference>
<dbReference type="GO" id="GO:0070536">
    <property type="term" value="P:protein K63-linked deubiquitination"/>
    <property type="evidence" value="ECO:0000314"/>
    <property type="project" value="UniProtKB"/>
</dbReference>
<dbReference type="GO" id="GO:0006508">
    <property type="term" value="P:proteolysis"/>
    <property type="evidence" value="ECO:0007669"/>
    <property type="project" value="UniProtKB-KW"/>
</dbReference>
<dbReference type="CDD" id="cd22747">
    <property type="entry name" value="OTU_OTUD1"/>
    <property type="match status" value="1"/>
</dbReference>
<dbReference type="FunFam" id="3.90.70.80:FF:000010">
    <property type="entry name" value="OTU domain-containing protein 1"/>
    <property type="match status" value="1"/>
</dbReference>
<dbReference type="Gene3D" id="3.90.70.80">
    <property type="match status" value="1"/>
</dbReference>
<dbReference type="InterPro" id="IPR003323">
    <property type="entry name" value="OTU_dom"/>
</dbReference>
<dbReference type="InterPro" id="IPR047834">
    <property type="entry name" value="OTUD1_OTU"/>
</dbReference>
<dbReference type="InterPro" id="IPR038765">
    <property type="entry name" value="Papain-like_cys_pep_sf"/>
</dbReference>
<dbReference type="InterPro" id="IPR050704">
    <property type="entry name" value="Peptidase_C85-like"/>
</dbReference>
<dbReference type="PANTHER" id="PTHR12419">
    <property type="entry name" value="OTU DOMAIN CONTAINING PROTEIN"/>
    <property type="match status" value="1"/>
</dbReference>
<dbReference type="PANTHER" id="PTHR12419:SF101">
    <property type="entry name" value="OTU DOMAIN-CONTAINING PROTEIN 1"/>
    <property type="match status" value="1"/>
</dbReference>
<dbReference type="Pfam" id="PF02338">
    <property type="entry name" value="OTU"/>
    <property type="match status" value="1"/>
</dbReference>
<dbReference type="SUPFAM" id="SSF54001">
    <property type="entry name" value="Cysteine proteinases"/>
    <property type="match status" value="1"/>
</dbReference>
<dbReference type="PROSITE" id="PS50802">
    <property type="entry name" value="OTU"/>
    <property type="match status" value="1"/>
</dbReference>
<protein>
    <recommendedName>
        <fullName>OTU domain-containing protein 1</fullName>
        <ecNumber evidence="6 7">3.4.19.12</ecNumber>
    </recommendedName>
    <alternativeName>
        <fullName>DUBA-7</fullName>
    </alternativeName>
</protein>
<organism>
    <name type="scientific">Homo sapiens</name>
    <name type="common">Human</name>
    <dbReference type="NCBI Taxonomy" id="9606"/>
    <lineage>
        <taxon>Eukaryota</taxon>
        <taxon>Metazoa</taxon>
        <taxon>Chordata</taxon>
        <taxon>Craniata</taxon>
        <taxon>Vertebrata</taxon>
        <taxon>Euteleostomi</taxon>
        <taxon>Mammalia</taxon>
        <taxon>Eutheria</taxon>
        <taxon>Euarchontoglires</taxon>
        <taxon>Primates</taxon>
        <taxon>Haplorrhini</taxon>
        <taxon>Catarrhini</taxon>
        <taxon>Hominidae</taxon>
        <taxon>Homo</taxon>
    </lineage>
</organism>
<name>OTUD1_HUMAN</name>
<evidence type="ECO:0000250" key="1">
    <source>
        <dbReference type="UniProtKB" id="Q5VVQ6"/>
    </source>
</evidence>
<evidence type="ECO:0000250" key="2">
    <source>
        <dbReference type="UniProtKB" id="Q96FW1"/>
    </source>
</evidence>
<evidence type="ECO:0000255" key="3"/>
<evidence type="ECO:0000255" key="4">
    <source>
        <dbReference type="PROSITE-ProRule" id="PRU00139"/>
    </source>
</evidence>
<evidence type="ECO:0000256" key="5">
    <source>
        <dbReference type="SAM" id="MobiDB-lite"/>
    </source>
</evidence>
<evidence type="ECO:0000269" key="6">
    <source>
    </source>
</evidence>
<evidence type="ECO:0000269" key="7">
    <source>
    </source>
</evidence>
<evidence type="ECO:0000303" key="8">
    <source>
    </source>
</evidence>
<evidence type="ECO:0000305" key="9">
    <source>
    </source>
</evidence>
<evidence type="ECO:0000305" key="10">
    <source>
    </source>
</evidence>
<evidence type="ECO:0000312" key="11">
    <source>
        <dbReference type="HGNC" id="HGNC:27346"/>
    </source>
</evidence>
<evidence type="ECO:0007829" key="12">
    <source>
        <dbReference type="PDB" id="4BOP"/>
    </source>
</evidence>
<gene>
    <name evidence="8 11" type="primary">OTUD1</name>
    <name type="synonym">DUBA7</name>
    <name type="synonym">OTDC1</name>
</gene>
<reference key="1">
    <citation type="journal article" date="2004" name="Nature">
        <title>The DNA sequence and comparative analysis of human chromosome 10.</title>
        <authorList>
            <person name="Deloukas P."/>
            <person name="Earthrowl M.E."/>
            <person name="Grafham D.V."/>
            <person name="Rubenfield M."/>
            <person name="French L."/>
            <person name="Steward C.A."/>
            <person name="Sims S.K."/>
            <person name="Jones M.C."/>
            <person name="Searle S."/>
            <person name="Scott C."/>
            <person name="Howe K."/>
            <person name="Hunt S.E."/>
            <person name="Andrews T.D."/>
            <person name="Gilbert J.G.R."/>
            <person name="Swarbreck D."/>
            <person name="Ashurst J.L."/>
            <person name="Taylor A."/>
            <person name="Battles J."/>
            <person name="Bird C.P."/>
            <person name="Ainscough R."/>
            <person name="Almeida J.P."/>
            <person name="Ashwell R.I.S."/>
            <person name="Ambrose K.D."/>
            <person name="Babbage A.K."/>
            <person name="Bagguley C.L."/>
            <person name="Bailey J."/>
            <person name="Banerjee R."/>
            <person name="Bates K."/>
            <person name="Beasley H."/>
            <person name="Bray-Allen S."/>
            <person name="Brown A.J."/>
            <person name="Brown J.Y."/>
            <person name="Burford D.C."/>
            <person name="Burrill W."/>
            <person name="Burton J."/>
            <person name="Cahill P."/>
            <person name="Camire D."/>
            <person name="Carter N.P."/>
            <person name="Chapman J.C."/>
            <person name="Clark S.Y."/>
            <person name="Clarke G."/>
            <person name="Clee C.M."/>
            <person name="Clegg S."/>
            <person name="Corby N."/>
            <person name="Coulson A."/>
            <person name="Dhami P."/>
            <person name="Dutta I."/>
            <person name="Dunn M."/>
            <person name="Faulkner L."/>
            <person name="Frankish A."/>
            <person name="Frankland J.A."/>
            <person name="Garner P."/>
            <person name="Garnett J."/>
            <person name="Gribble S."/>
            <person name="Griffiths C."/>
            <person name="Grocock R."/>
            <person name="Gustafson E."/>
            <person name="Hammond S."/>
            <person name="Harley J.L."/>
            <person name="Hart E."/>
            <person name="Heath P.D."/>
            <person name="Ho T.P."/>
            <person name="Hopkins B."/>
            <person name="Horne J."/>
            <person name="Howden P.J."/>
            <person name="Huckle E."/>
            <person name="Hynds C."/>
            <person name="Johnson C."/>
            <person name="Johnson D."/>
            <person name="Kana A."/>
            <person name="Kay M."/>
            <person name="Kimberley A.M."/>
            <person name="Kershaw J.K."/>
            <person name="Kokkinaki M."/>
            <person name="Laird G.K."/>
            <person name="Lawlor S."/>
            <person name="Lee H.M."/>
            <person name="Leongamornlert D.A."/>
            <person name="Laird G."/>
            <person name="Lloyd C."/>
            <person name="Lloyd D.M."/>
            <person name="Loveland J."/>
            <person name="Lovell J."/>
            <person name="McLaren S."/>
            <person name="McLay K.E."/>
            <person name="McMurray A."/>
            <person name="Mashreghi-Mohammadi M."/>
            <person name="Matthews L."/>
            <person name="Milne S."/>
            <person name="Nickerson T."/>
            <person name="Nguyen M."/>
            <person name="Overton-Larty E."/>
            <person name="Palmer S.A."/>
            <person name="Pearce A.V."/>
            <person name="Peck A.I."/>
            <person name="Pelan S."/>
            <person name="Phillimore B."/>
            <person name="Porter K."/>
            <person name="Rice C.M."/>
            <person name="Rogosin A."/>
            <person name="Ross M.T."/>
            <person name="Sarafidou T."/>
            <person name="Sehra H.K."/>
            <person name="Shownkeen R."/>
            <person name="Skuce C.D."/>
            <person name="Smith M."/>
            <person name="Standring L."/>
            <person name="Sycamore N."/>
            <person name="Tester J."/>
            <person name="Thorpe A."/>
            <person name="Torcasso W."/>
            <person name="Tracey A."/>
            <person name="Tromans A."/>
            <person name="Tsolas J."/>
            <person name="Wall M."/>
            <person name="Walsh J."/>
            <person name="Wang H."/>
            <person name="Weinstock K."/>
            <person name="West A.P."/>
            <person name="Willey D.L."/>
            <person name="Whitehead S.L."/>
            <person name="Wilming L."/>
            <person name="Wray P.W."/>
            <person name="Young L."/>
            <person name="Chen Y."/>
            <person name="Lovering R.C."/>
            <person name="Moschonas N.K."/>
            <person name="Siebert R."/>
            <person name="Fechtel K."/>
            <person name="Bentley D."/>
            <person name="Durbin R.M."/>
            <person name="Hubbard T."/>
            <person name="Doucette-Stamm L."/>
            <person name="Beck S."/>
            <person name="Smith D.R."/>
            <person name="Rogers J."/>
        </authorList>
    </citation>
    <scope>NUCLEOTIDE SEQUENCE [LARGE SCALE GENOMIC DNA]</scope>
</reference>
<reference key="2">
    <citation type="journal article" date="2022" name="Mol. Cell. Biol.">
        <title>Deubiquitinase OTUD1 resolves stalled translation on polyA and rare codon rich mRNAs.</title>
        <authorList>
            <person name="Snaurova R."/>
            <person name="Vdovin A."/>
            <person name="Durech M."/>
            <person name="Nezval J."/>
            <person name="Zihala D."/>
            <person name="Jelinek T."/>
            <person name="Hajek R."/>
            <person name="Simicek M."/>
        </authorList>
    </citation>
    <scope>FUNCTION</scope>
    <scope>CATALYTIC ACTIVITY</scope>
    <scope>ACTIVE SITE</scope>
    <scope>MUTAGENESIS OF CYS-320</scope>
</reference>
<reference key="3">
    <citation type="journal article" date="2013" name="Cell">
        <title>OTU deubiquitinases reveal mechanisms of linkage specificity and enable ubiquitin chain restriction analysis.</title>
        <authorList>
            <person name="Mevissen T.E."/>
            <person name="Hospenthal M.K."/>
            <person name="Geurink P.P."/>
            <person name="Elliott P.R."/>
            <person name="Akutsu M."/>
            <person name="Arnaudo N."/>
            <person name="Ekkebus R."/>
            <person name="Kulathu Y."/>
            <person name="Wauer T."/>
            <person name="El Oualid F."/>
            <person name="Freund S.M."/>
            <person name="Ovaa H."/>
            <person name="Komander D."/>
        </authorList>
    </citation>
    <scope>X-RAY CRYSTALLOGRAPHY (2.1 ANGSTROMS) OF 287-437</scope>
    <scope>FUNCTION</scope>
    <scope>CATALYTIC ACTIVITY</scope>
</reference>